<name>CYL1_ARATH</name>
<proteinExistence type="evidence at protein level"/>
<feature type="signal peptide" evidence="1">
    <location>
        <begin position="1"/>
        <end position="24"/>
    </location>
</feature>
<feature type="chain" id="PRO_5011950512" description="Cyclase-like protein 1">
    <location>
        <begin position="25"/>
        <end position="255"/>
    </location>
</feature>
<dbReference type="EMBL" id="AL021961">
    <property type="protein sequence ID" value="CAA17554.1"/>
    <property type="status" value="ALT_SEQ"/>
    <property type="molecule type" value="Genomic_DNA"/>
</dbReference>
<dbReference type="EMBL" id="AL161585">
    <property type="protein sequence ID" value="CAB80135.1"/>
    <property type="status" value="ALT_SEQ"/>
    <property type="molecule type" value="Genomic_DNA"/>
</dbReference>
<dbReference type="EMBL" id="CP002687">
    <property type="protein sequence ID" value="AEE86337.1"/>
    <property type="molecule type" value="Genomic_DNA"/>
</dbReference>
<dbReference type="EMBL" id="AF428442">
    <property type="protein sequence ID" value="AAL16211.1"/>
    <property type="molecule type" value="mRNA"/>
</dbReference>
<dbReference type="EMBL" id="AY037228">
    <property type="protein sequence ID" value="AAK59828.1"/>
    <property type="molecule type" value="mRNA"/>
</dbReference>
<dbReference type="EMBL" id="AY125547">
    <property type="protein sequence ID" value="AAM78057.1"/>
    <property type="molecule type" value="mRNA"/>
</dbReference>
<dbReference type="EMBL" id="AY088629">
    <property type="protein sequence ID" value="AAM66951.1"/>
    <property type="molecule type" value="mRNA"/>
</dbReference>
<dbReference type="PIR" id="T05418">
    <property type="entry name" value="T05418"/>
</dbReference>
<dbReference type="RefSeq" id="NP_567957.1">
    <property type="nucleotide sequence ID" value="NM_119581.4"/>
</dbReference>
<dbReference type="SMR" id="Q93V74"/>
<dbReference type="FunCoup" id="Q93V74">
    <property type="interactions" value="357"/>
</dbReference>
<dbReference type="STRING" id="3702.Q93V74"/>
<dbReference type="MetOSite" id="Q93V74"/>
<dbReference type="SwissPalm" id="Q93V74"/>
<dbReference type="PaxDb" id="3702-AT4G34180.1"/>
<dbReference type="ProteomicsDB" id="222739"/>
<dbReference type="EnsemblPlants" id="AT4G34180.1">
    <property type="protein sequence ID" value="AT4G34180.1"/>
    <property type="gene ID" value="AT4G34180"/>
</dbReference>
<dbReference type="GeneID" id="829566"/>
<dbReference type="Gramene" id="AT4G34180.1">
    <property type="protein sequence ID" value="AT4G34180.1"/>
    <property type="gene ID" value="AT4G34180"/>
</dbReference>
<dbReference type="KEGG" id="ath:AT4G34180"/>
<dbReference type="Araport" id="AT4G34180"/>
<dbReference type="TAIR" id="AT4G34180">
    <property type="gene designation" value="CYCLASE1"/>
</dbReference>
<dbReference type="eggNOG" id="ENOG502QRBQ">
    <property type="taxonomic scope" value="Eukaryota"/>
</dbReference>
<dbReference type="HOGENOM" id="CLU_030671_4_1_1"/>
<dbReference type="InParanoid" id="Q93V74"/>
<dbReference type="OMA" id="YLNVAAW"/>
<dbReference type="PhylomeDB" id="Q93V74"/>
<dbReference type="PRO" id="PR:Q93V74"/>
<dbReference type="Proteomes" id="UP000006548">
    <property type="component" value="Chromosome 4"/>
</dbReference>
<dbReference type="ExpressionAtlas" id="Q93V74">
    <property type="expression patterns" value="baseline and differential"/>
</dbReference>
<dbReference type="GO" id="GO:0005783">
    <property type="term" value="C:endoplasmic reticulum"/>
    <property type="evidence" value="ECO:0007005"/>
    <property type="project" value="TAIR"/>
</dbReference>
<dbReference type="GO" id="GO:0005576">
    <property type="term" value="C:extracellular region"/>
    <property type="evidence" value="ECO:0007669"/>
    <property type="project" value="UniProtKB-KW"/>
</dbReference>
<dbReference type="GO" id="GO:0005794">
    <property type="term" value="C:Golgi apparatus"/>
    <property type="evidence" value="ECO:0007005"/>
    <property type="project" value="TAIR"/>
</dbReference>
<dbReference type="GO" id="GO:0005886">
    <property type="term" value="C:plasma membrane"/>
    <property type="evidence" value="ECO:0007005"/>
    <property type="project" value="TAIR"/>
</dbReference>
<dbReference type="GO" id="GO:0099503">
    <property type="term" value="C:secretory vesicle"/>
    <property type="evidence" value="ECO:0007005"/>
    <property type="project" value="TAIR"/>
</dbReference>
<dbReference type="GO" id="GO:0004061">
    <property type="term" value="F:arylformamidase activity"/>
    <property type="evidence" value="ECO:0007669"/>
    <property type="project" value="InterPro"/>
</dbReference>
<dbReference type="GO" id="GO:0006952">
    <property type="term" value="P:defense response"/>
    <property type="evidence" value="ECO:0007669"/>
    <property type="project" value="UniProtKB-KW"/>
</dbReference>
<dbReference type="GO" id="GO:0019441">
    <property type="term" value="P:L-tryptophan catabolic process to kynurenine"/>
    <property type="evidence" value="ECO:0007669"/>
    <property type="project" value="InterPro"/>
</dbReference>
<dbReference type="GO" id="GO:0043069">
    <property type="term" value="P:negative regulation of programmed cell death"/>
    <property type="evidence" value="ECO:0000315"/>
    <property type="project" value="TAIR"/>
</dbReference>
<dbReference type="FunFam" id="3.50.30.50:FF:000002">
    <property type="entry name" value="Kynurenine formamidase"/>
    <property type="match status" value="1"/>
</dbReference>
<dbReference type="Gene3D" id="3.50.30.50">
    <property type="entry name" value="Putative cyclase"/>
    <property type="match status" value="1"/>
</dbReference>
<dbReference type="InterPro" id="IPR007325">
    <property type="entry name" value="KFase/CYL"/>
</dbReference>
<dbReference type="InterPro" id="IPR037175">
    <property type="entry name" value="KFase_sf"/>
</dbReference>
<dbReference type="PANTHER" id="PTHR31118:SF16">
    <property type="entry name" value="CYCLASE-LIKE PROTEIN 1-RELATED"/>
    <property type="match status" value="1"/>
</dbReference>
<dbReference type="PANTHER" id="PTHR31118">
    <property type="entry name" value="CYCLASE-LIKE PROTEIN 2"/>
    <property type="match status" value="1"/>
</dbReference>
<dbReference type="Pfam" id="PF04199">
    <property type="entry name" value="Cyclase"/>
    <property type="match status" value="1"/>
</dbReference>
<dbReference type="SUPFAM" id="SSF102198">
    <property type="entry name" value="Putative cyclase"/>
    <property type="match status" value="1"/>
</dbReference>
<keyword id="KW-0272">Extracellular matrix</keyword>
<keyword id="KW-0611">Plant defense</keyword>
<keyword id="KW-1185">Reference proteome</keyword>
<keyword id="KW-0964">Secreted</keyword>
<keyword id="KW-0732">Signal</keyword>
<sequence length="255" mass="28385">MTRSVSFPLFLFAVVLSLSSSLLADDPKPIRREVYEGGKIYDISHRYTPEIPAWESSEGLGKTFLRLAASMKNGSFANVSEMKLSVHSGTHVDAPGHFWDNYYDAGFDTDSLDLQVLNGPALLVDVPRDKNITAEVMESLHIQRGVRRVLFRTSNTDKRLMFKKEFDSSFAGFMTDGAKWLVENTDIKLIGLDYLSFAAFEESPATHRVILKGRDIIPVEALKLDGVEVGTYSLHCLPLRLVGAEGAPTRCILIK</sequence>
<protein>
    <recommendedName>
        <fullName evidence="4">Cyclase-like protein 1</fullName>
    </recommendedName>
</protein>
<evidence type="ECO:0000255" key="1"/>
<evidence type="ECO:0000269" key="2">
    <source>
    </source>
</evidence>
<evidence type="ECO:0000303" key="3">
    <source>
    </source>
</evidence>
<evidence type="ECO:0000305" key="4"/>
<evidence type="ECO:0000305" key="5">
    <source>
    </source>
</evidence>
<evidence type="ECO:0000312" key="6">
    <source>
        <dbReference type="Araport" id="AT4G34180"/>
    </source>
</evidence>
<evidence type="ECO:0000312" key="7">
    <source>
        <dbReference type="EMBL" id="AEE86337.1"/>
    </source>
</evidence>
<gene>
    <name evidence="3" type="primary">CYCLASE1</name>
    <name evidence="6" type="ordered locus">At4g34180</name>
    <name evidence="7" type="ORF">F10M10.6</name>
</gene>
<organism>
    <name type="scientific">Arabidopsis thaliana</name>
    <name type="common">Mouse-ear cress</name>
    <dbReference type="NCBI Taxonomy" id="3702"/>
    <lineage>
        <taxon>Eukaryota</taxon>
        <taxon>Viridiplantae</taxon>
        <taxon>Streptophyta</taxon>
        <taxon>Embryophyta</taxon>
        <taxon>Tracheophyta</taxon>
        <taxon>Spermatophyta</taxon>
        <taxon>Magnoliopsida</taxon>
        <taxon>eudicotyledons</taxon>
        <taxon>Gunneridae</taxon>
        <taxon>Pentapetalae</taxon>
        <taxon>rosids</taxon>
        <taxon>malvids</taxon>
        <taxon>Brassicales</taxon>
        <taxon>Brassicaceae</taxon>
        <taxon>Camelineae</taxon>
        <taxon>Arabidopsis</taxon>
    </lineage>
</organism>
<accession>Q93V74</accession>
<accession>O49487</accession>
<comment type="function">
    <text evidence="2 5">Acts as a negative regulator of fumonisin B1- and pathogen-induced programmed cell death (PCD), and regulates pathogen-induced symptom development (PubMed:25862728). May function redundantly with CYCLASE2 for normal plant growth, development and viability (Probable).</text>
</comment>
<comment type="subcellular location">
    <subcellularLocation>
        <location evidence="2">Secreted</location>
        <location evidence="2">Extracellular space</location>
        <location evidence="2">Extracellular matrix</location>
    </subcellularLocation>
</comment>
<comment type="induction">
    <text evidence="2">Induced by salicylate.</text>
</comment>
<comment type="disruption phenotype">
    <text evidence="2">No visible phenotype under normal growth conditions, but leaves of mutant plants exhibit a severely increased cell death when exposed to fumonisin B1 or a bacterial pathogen that triggers the defensive hypersensitive cell death. The double mutants cyclase1 and cyclase2 are embryonic lethal.</text>
</comment>
<comment type="similarity">
    <text evidence="4">Belongs to the Cyclase 1 superfamily.</text>
</comment>
<comment type="sequence caution" evidence="4">
    <conflict type="erroneous gene model prediction">
        <sequence resource="EMBL-CDS" id="CAA17554"/>
    </conflict>
</comment>
<comment type="sequence caution" evidence="4">
    <conflict type="erroneous gene model prediction">
        <sequence resource="EMBL-CDS" id="CAB80135"/>
    </conflict>
</comment>
<reference key="1">
    <citation type="journal article" date="1999" name="Nature">
        <title>Sequence and analysis of chromosome 4 of the plant Arabidopsis thaliana.</title>
        <authorList>
            <person name="Mayer K.F.X."/>
            <person name="Schueller C."/>
            <person name="Wambutt R."/>
            <person name="Murphy G."/>
            <person name="Volckaert G."/>
            <person name="Pohl T."/>
            <person name="Duesterhoeft A."/>
            <person name="Stiekema W."/>
            <person name="Entian K.-D."/>
            <person name="Terryn N."/>
            <person name="Harris B."/>
            <person name="Ansorge W."/>
            <person name="Brandt P."/>
            <person name="Grivell L.A."/>
            <person name="Rieger M."/>
            <person name="Weichselgartner M."/>
            <person name="de Simone V."/>
            <person name="Obermaier B."/>
            <person name="Mache R."/>
            <person name="Mueller M."/>
            <person name="Kreis M."/>
            <person name="Delseny M."/>
            <person name="Puigdomenech P."/>
            <person name="Watson M."/>
            <person name="Schmidtheini T."/>
            <person name="Reichert B."/>
            <person name="Portetelle D."/>
            <person name="Perez-Alonso M."/>
            <person name="Boutry M."/>
            <person name="Bancroft I."/>
            <person name="Vos P."/>
            <person name="Hoheisel J."/>
            <person name="Zimmermann W."/>
            <person name="Wedler H."/>
            <person name="Ridley P."/>
            <person name="Langham S.-A."/>
            <person name="McCullagh B."/>
            <person name="Bilham L."/>
            <person name="Robben J."/>
            <person name="van der Schueren J."/>
            <person name="Grymonprez B."/>
            <person name="Chuang Y.-J."/>
            <person name="Vandenbussche F."/>
            <person name="Braeken M."/>
            <person name="Weltjens I."/>
            <person name="Voet M."/>
            <person name="Bastiaens I."/>
            <person name="Aert R."/>
            <person name="Defoor E."/>
            <person name="Weitzenegger T."/>
            <person name="Bothe G."/>
            <person name="Ramsperger U."/>
            <person name="Hilbert H."/>
            <person name="Braun M."/>
            <person name="Holzer E."/>
            <person name="Brandt A."/>
            <person name="Peters S."/>
            <person name="van Staveren M."/>
            <person name="Dirkse W."/>
            <person name="Mooijman P."/>
            <person name="Klein Lankhorst R."/>
            <person name="Rose M."/>
            <person name="Hauf J."/>
            <person name="Koetter P."/>
            <person name="Berneiser S."/>
            <person name="Hempel S."/>
            <person name="Feldpausch M."/>
            <person name="Lamberth S."/>
            <person name="Van den Daele H."/>
            <person name="De Keyser A."/>
            <person name="Buysshaert C."/>
            <person name="Gielen J."/>
            <person name="Villarroel R."/>
            <person name="De Clercq R."/>
            <person name="van Montagu M."/>
            <person name="Rogers J."/>
            <person name="Cronin A."/>
            <person name="Quail M.A."/>
            <person name="Bray-Allen S."/>
            <person name="Clark L."/>
            <person name="Doggett J."/>
            <person name="Hall S."/>
            <person name="Kay M."/>
            <person name="Lennard N."/>
            <person name="McLay K."/>
            <person name="Mayes R."/>
            <person name="Pettett A."/>
            <person name="Rajandream M.A."/>
            <person name="Lyne M."/>
            <person name="Benes V."/>
            <person name="Rechmann S."/>
            <person name="Borkova D."/>
            <person name="Bloecker H."/>
            <person name="Scharfe M."/>
            <person name="Grimm M."/>
            <person name="Loehnert T.-H."/>
            <person name="Dose S."/>
            <person name="de Haan M."/>
            <person name="Maarse A.C."/>
            <person name="Schaefer M."/>
            <person name="Mueller-Auer S."/>
            <person name="Gabel C."/>
            <person name="Fuchs M."/>
            <person name="Fartmann B."/>
            <person name="Granderath K."/>
            <person name="Dauner D."/>
            <person name="Herzl A."/>
            <person name="Neumann S."/>
            <person name="Argiriou A."/>
            <person name="Vitale D."/>
            <person name="Liguori R."/>
            <person name="Piravandi E."/>
            <person name="Massenet O."/>
            <person name="Quigley F."/>
            <person name="Clabauld G."/>
            <person name="Muendlein A."/>
            <person name="Felber R."/>
            <person name="Schnabl S."/>
            <person name="Hiller R."/>
            <person name="Schmidt W."/>
            <person name="Lecharny A."/>
            <person name="Aubourg S."/>
            <person name="Chefdor F."/>
            <person name="Cooke R."/>
            <person name="Berger C."/>
            <person name="Monfort A."/>
            <person name="Casacuberta E."/>
            <person name="Gibbons T."/>
            <person name="Weber N."/>
            <person name="Vandenbol M."/>
            <person name="Bargues M."/>
            <person name="Terol J."/>
            <person name="Torres A."/>
            <person name="Perez-Perez A."/>
            <person name="Purnelle B."/>
            <person name="Bent E."/>
            <person name="Johnson S."/>
            <person name="Tacon D."/>
            <person name="Jesse T."/>
            <person name="Heijnen L."/>
            <person name="Schwarz S."/>
            <person name="Scholler P."/>
            <person name="Heber S."/>
            <person name="Francs P."/>
            <person name="Bielke C."/>
            <person name="Frishman D."/>
            <person name="Haase D."/>
            <person name="Lemcke K."/>
            <person name="Mewes H.-W."/>
            <person name="Stocker S."/>
            <person name="Zaccaria P."/>
            <person name="Bevan M."/>
            <person name="Wilson R.K."/>
            <person name="de la Bastide M."/>
            <person name="Habermann K."/>
            <person name="Parnell L."/>
            <person name="Dedhia N."/>
            <person name="Gnoj L."/>
            <person name="Schutz K."/>
            <person name="Huang E."/>
            <person name="Spiegel L."/>
            <person name="Sekhon M."/>
            <person name="Murray J."/>
            <person name="Sheet P."/>
            <person name="Cordes M."/>
            <person name="Abu-Threideh J."/>
            <person name="Stoneking T."/>
            <person name="Kalicki J."/>
            <person name="Graves T."/>
            <person name="Harmon G."/>
            <person name="Edwards J."/>
            <person name="Latreille P."/>
            <person name="Courtney L."/>
            <person name="Cloud J."/>
            <person name="Abbott A."/>
            <person name="Scott K."/>
            <person name="Johnson D."/>
            <person name="Minx P."/>
            <person name="Bentley D."/>
            <person name="Fulton B."/>
            <person name="Miller N."/>
            <person name="Greco T."/>
            <person name="Kemp K."/>
            <person name="Kramer J."/>
            <person name="Fulton L."/>
            <person name="Mardis E."/>
            <person name="Dante M."/>
            <person name="Pepin K."/>
            <person name="Hillier L.W."/>
            <person name="Nelson J."/>
            <person name="Spieth J."/>
            <person name="Ryan E."/>
            <person name="Andrews S."/>
            <person name="Geisel C."/>
            <person name="Layman D."/>
            <person name="Du H."/>
            <person name="Ali J."/>
            <person name="Berghoff A."/>
            <person name="Jones K."/>
            <person name="Drone K."/>
            <person name="Cotton M."/>
            <person name="Joshu C."/>
            <person name="Antonoiu B."/>
            <person name="Zidanic M."/>
            <person name="Strong C."/>
            <person name="Sun H."/>
            <person name="Lamar B."/>
            <person name="Yordan C."/>
            <person name="Ma P."/>
            <person name="Zhong J."/>
            <person name="Preston R."/>
            <person name="Vil D."/>
            <person name="Shekher M."/>
            <person name="Matero A."/>
            <person name="Shah R."/>
            <person name="Swaby I.K."/>
            <person name="O'Shaughnessy A."/>
            <person name="Rodriguez M."/>
            <person name="Hoffman J."/>
            <person name="Till S."/>
            <person name="Granat S."/>
            <person name="Shohdy N."/>
            <person name="Hasegawa A."/>
            <person name="Hameed A."/>
            <person name="Lodhi M."/>
            <person name="Johnson A."/>
            <person name="Chen E."/>
            <person name="Marra M.A."/>
            <person name="Martienssen R."/>
            <person name="McCombie W.R."/>
        </authorList>
    </citation>
    <scope>NUCLEOTIDE SEQUENCE [LARGE SCALE GENOMIC DNA]</scope>
    <source>
        <strain>cv. Columbia</strain>
    </source>
</reference>
<reference key="2">
    <citation type="journal article" date="2017" name="Plant J.">
        <title>Araport11: a complete reannotation of the Arabidopsis thaliana reference genome.</title>
        <authorList>
            <person name="Cheng C.Y."/>
            <person name="Krishnakumar V."/>
            <person name="Chan A.P."/>
            <person name="Thibaud-Nissen F."/>
            <person name="Schobel S."/>
            <person name="Town C.D."/>
        </authorList>
    </citation>
    <scope>GENOME REANNOTATION</scope>
    <source>
        <strain>cv. Columbia</strain>
    </source>
</reference>
<reference key="3">
    <citation type="journal article" date="2003" name="Science">
        <title>Empirical analysis of transcriptional activity in the Arabidopsis genome.</title>
        <authorList>
            <person name="Yamada K."/>
            <person name="Lim J."/>
            <person name="Dale J.M."/>
            <person name="Chen H."/>
            <person name="Shinn P."/>
            <person name="Palm C.J."/>
            <person name="Southwick A.M."/>
            <person name="Wu H.C."/>
            <person name="Kim C.J."/>
            <person name="Nguyen M."/>
            <person name="Pham P.K."/>
            <person name="Cheuk R.F."/>
            <person name="Karlin-Newmann G."/>
            <person name="Liu S.X."/>
            <person name="Lam B."/>
            <person name="Sakano H."/>
            <person name="Wu T."/>
            <person name="Yu G."/>
            <person name="Miranda M."/>
            <person name="Quach H.L."/>
            <person name="Tripp M."/>
            <person name="Chang C.H."/>
            <person name="Lee J.M."/>
            <person name="Toriumi M.J."/>
            <person name="Chan M.M."/>
            <person name="Tang C.C."/>
            <person name="Onodera C.S."/>
            <person name="Deng J.M."/>
            <person name="Akiyama K."/>
            <person name="Ansari Y."/>
            <person name="Arakawa T."/>
            <person name="Banh J."/>
            <person name="Banno F."/>
            <person name="Bowser L."/>
            <person name="Brooks S.Y."/>
            <person name="Carninci P."/>
            <person name="Chao Q."/>
            <person name="Choy N."/>
            <person name="Enju A."/>
            <person name="Goldsmith A.D."/>
            <person name="Gurjal M."/>
            <person name="Hansen N.F."/>
            <person name="Hayashizaki Y."/>
            <person name="Johnson-Hopson C."/>
            <person name="Hsuan V.W."/>
            <person name="Iida K."/>
            <person name="Karnes M."/>
            <person name="Khan S."/>
            <person name="Koesema E."/>
            <person name="Ishida J."/>
            <person name="Jiang P.X."/>
            <person name="Jones T."/>
            <person name="Kawai J."/>
            <person name="Kamiya A."/>
            <person name="Meyers C."/>
            <person name="Nakajima M."/>
            <person name="Narusaka M."/>
            <person name="Seki M."/>
            <person name="Sakurai T."/>
            <person name="Satou M."/>
            <person name="Tamse R."/>
            <person name="Vaysberg M."/>
            <person name="Wallender E.K."/>
            <person name="Wong C."/>
            <person name="Yamamura Y."/>
            <person name="Yuan S."/>
            <person name="Shinozaki K."/>
            <person name="Davis R.W."/>
            <person name="Theologis A."/>
            <person name="Ecker J.R."/>
        </authorList>
    </citation>
    <scope>NUCLEOTIDE SEQUENCE [LARGE SCALE MRNA]</scope>
    <source>
        <strain>cv. Columbia</strain>
    </source>
</reference>
<reference key="4">
    <citation type="submission" date="2002-03" db="EMBL/GenBank/DDBJ databases">
        <title>Full-length cDNA from Arabidopsis thaliana.</title>
        <authorList>
            <person name="Brover V.V."/>
            <person name="Troukhan M.E."/>
            <person name="Alexandrov N.A."/>
            <person name="Lu Y.-P."/>
            <person name="Flavell R.B."/>
            <person name="Feldmann K.A."/>
        </authorList>
    </citation>
    <scope>NUCLEOTIDE SEQUENCE [LARGE SCALE MRNA]</scope>
</reference>
<reference key="5">
    <citation type="journal article" date="2015" name="Mol. Cell. Proteomics">
        <title>A novel function for Arabidopsis CYCLASE1 in programmed cell death revealed by isobaric tags for relative and absolute quantitation (iTRAQ) analysis of extracellular matrix proteins.</title>
        <authorList>
            <person name="Smith S.J."/>
            <person name="Kroon J.T."/>
            <person name="Simon W.J."/>
            <person name="Slabas A.R."/>
            <person name="Chivasa S."/>
        </authorList>
    </citation>
    <scope>FUNCTION</scope>
    <scope>IDENTIFICATION BY MASS SPECTROMETRY</scope>
    <scope>SUBCELLULAR LOCATION</scope>
    <scope>INDUCTION BY SALICYLATE</scope>
    <scope>DISRUPTION PHENOTYPE</scope>
    <scope>GENE FAMILY</scope>
    <scope>NOMENCLATURE</scope>
</reference>